<gene>
    <name evidence="1" type="primary">ilvD</name>
    <name type="ordered locus">DMR_00250</name>
</gene>
<feature type="chain" id="PRO_1000201774" description="Dihydroxy-acid dehydratase">
    <location>
        <begin position="1"/>
        <end position="558"/>
    </location>
</feature>
<feature type="active site" description="Proton acceptor" evidence="1">
    <location>
        <position position="469"/>
    </location>
</feature>
<feature type="binding site" evidence="1">
    <location>
        <position position="78"/>
    </location>
    <ligand>
        <name>Mg(2+)</name>
        <dbReference type="ChEBI" id="CHEBI:18420"/>
    </ligand>
</feature>
<feature type="binding site" evidence="1">
    <location>
        <position position="119"/>
    </location>
    <ligand>
        <name>[2Fe-2S] cluster</name>
        <dbReference type="ChEBI" id="CHEBI:190135"/>
    </ligand>
</feature>
<feature type="binding site" evidence="1">
    <location>
        <position position="120"/>
    </location>
    <ligand>
        <name>Mg(2+)</name>
        <dbReference type="ChEBI" id="CHEBI:18420"/>
    </ligand>
</feature>
<feature type="binding site" description="via carbamate group" evidence="1">
    <location>
        <position position="121"/>
    </location>
    <ligand>
        <name>Mg(2+)</name>
        <dbReference type="ChEBI" id="CHEBI:18420"/>
    </ligand>
</feature>
<feature type="binding site" evidence="1">
    <location>
        <position position="191"/>
    </location>
    <ligand>
        <name>[2Fe-2S] cluster</name>
        <dbReference type="ChEBI" id="CHEBI:190135"/>
    </ligand>
</feature>
<feature type="binding site" evidence="1">
    <location>
        <position position="443"/>
    </location>
    <ligand>
        <name>Mg(2+)</name>
        <dbReference type="ChEBI" id="CHEBI:18420"/>
    </ligand>
</feature>
<feature type="modified residue" description="N6-carboxylysine" evidence="1">
    <location>
        <position position="121"/>
    </location>
</feature>
<organism>
    <name type="scientific">Solidesulfovibrio magneticus (strain ATCC 700980 / DSM 13731 / RS-1)</name>
    <name type="common">Desulfovibrio magneticus</name>
    <dbReference type="NCBI Taxonomy" id="573370"/>
    <lineage>
        <taxon>Bacteria</taxon>
        <taxon>Pseudomonadati</taxon>
        <taxon>Thermodesulfobacteriota</taxon>
        <taxon>Desulfovibrionia</taxon>
        <taxon>Desulfovibrionales</taxon>
        <taxon>Desulfovibrionaceae</taxon>
        <taxon>Solidesulfovibrio</taxon>
    </lineage>
</organism>
<reference key="1">
    <citation type="journal article" date="2009" name="Genome Res.">
        <title>Whole genome sequence of Desulfovibrio magneticus strain RS-1 revealed common gene clusters in magnetotactic bacteria.</title>
        <authorList>
            <person name="Nakazawa H."/>
            <person name="Arakaki A."/>
            <person name="Narita-Yamada S."/>
            <person name="Yashiro I."/>
            <person name="Jinno K."/>
            <person name="Aoki N."/>
            <person name="Tsuruyama A."/>
            <person name="Okamura Y."/>
            <person name="Tanikawa S."/>
            <person name="Fujita N."/>
            <person name="Takeyama H."/>
            <person name="Matsunaga T."/>
        </authorList>
    </citation>
    <scope>NUCLEOTIDE SEQUENCE [LARGE SCALE GENOMIC DNA]</scope>
    <source>
        <strain>ATCC 700980 / DSM 13731 / RS-1</strain>
    </source>
</reference>
<dbReference type="EC" id="4.2.1.9" evidence="1"/>
<dbReference type="EMBL" id="AP010904">
    <property type="protein sequence ID" value="BAH73516.1"/>
    <property type="molecule type" value="Genomic_DNA"/>
</dbReference>
<dbReference type="RefSeq" id="WP_012749609.1">
    <property type="nucleotide sequence ID" value="NC_012796.1"/>
</dbReference>
<dbReference type="SMR" id="C4XT34"/>
<dbReference type="STRING" id="573370.DMR_00250"/>
<dbReference type="KEGG" id="dma:DMR_00250"/>
<dbReference type="eggNOG" id="COG0129">
    <property type="taxonomic scope" value="Bacteria"/>
</dbReference>
<dbReference type="HOGENOM" id="CLU_014271_4_2_7"/>
<dbReference type="OrthoDB" id="9807077at2"/>
<dbReference type="UniPathway" id="UPA00047">
    <property type="reaction ID" value="UER00057"/>
</dbReference>
<dbReference type="UniPathway" id="UPA00049">
    <property type="reaction ID" value="UER00061"/>
</dbReference>
<dbReference type="Proteomes" id="UP000009071">
    <property type="component" value="Chromosome"/>
</dbReference>
<dbReference type="GO" id="GO:0005829">
    <property type="term" value="C:cytosol"/>
    <property type="evidence" value="ECO:0007669"/>
    <property type="project" value="TreeGrafter"/>
</dbReference>
<dbReference type="GO" id="GO:0051537">
    <property type="term" value="F:2 iron, 2 sulfur cluster binding"/>
    <property type="evidence" value="ECO:0007669"/>
    <property type="project" value="UniProtKB-UniRule"/>
</dbReference>
<dbReference type="GO" id="GO:0004160">
    <property type="term" value="F:dihydroxy-acid dehydratase activity"/>
    <property type="evidence" value="ECO:0007669"/>
    <property type="project" value="UniProtKB-UniRule"/>
</dbReference>
<dbReference type="GO" id="GO:0000287">
    <property type="term" value="F:magnesium ion binding"/>
    <property type="evidence" value="ECO:0007669"/>
    <property type="project" value="UniProtKB-UniRule"/>
</dbReference>
<dbReference type="GO" id="GO:0009097">
    <property type="term" value="P:isoleucine biosynthetic process"/>
    <property type="evidence" value="ECO:0007669"/>
    <property type="project" value="UniProtKB-UniRule"/>
</dbReference>
<dbReference type="GO" id="GO:0009099">
    <property type="term" value="P:L-valine biosynthetic process"/>
    <property type="evidence" value="ECO:0007669"/>
    <property type="project" value="UniProtKB-UniRule"/>
</dbReference>
<dbReference type="FunFam" id="3.50.30.80:FF:000001">
    <property type="entry name" value="Dihydroxy-acid dehydratase"/>
    <property type="match status" value="1"/>
</dbReference>
<dbReference type="Gene3D" id="3.50.30.80">
    <property type="entry name" value="IlvD/EDD C-terminal domain-like"/>
    <property type="match status" value="1"/>
</dbReference>
<dbReference type="HAMAP" id="MF_00012">
    <property type="entry name" value="IlvD"/>
    <property type="match status" value="1"/>
</dbReference>
<dbReference type="InterPro" id="IPR042096">
    <property type="entry name" value="Dihydro-acid_dehy_C"/>
</dbReference>
<dbReference type="InterPro" id="IPR004404">
    <property type="entry name" value="DihydroxyA_deHydtase"/>
</dbReference>
<dbReference type="InterPro" id="IPR020558">
    <property type="entry name" value="DiOHA_6PGluconate_deHydtase_CS"/>
</dbReference>
<dbReference type="InterPro" id="IPR056740">
    <property type="entry name" value="ILV_EDD_C"/>
</dbReference>
<dbReference type="InterPro" id="IPR000581">
    <property type="entry name" value="ILV_EDD_N"/>
</dbReference>
<dbReference type="InterPro" id="IPR037237">
    <property type="entry name" value="IlvD/EDD_N"/>
</dbReference>
<dbReference type="NCBIfam" id="TIGR00110">
    <property type="entry name" value="ilvD"/>
    <property type="match status" value="1"/>
</dbReference>
<dbReference type="NCBIfam" id="NF002068">
    <property type="entry name" value="PRK00911.1"/>
    <property type="match status" value="1"/>
</dbReference>
<dbReference type="PANTHER" id="PTHR43661">
    <property type="entry name" value="D-XYLONATE DEHYDRATASE"/>
    <property type="match status" value="1"/>
</dbReference>
<dbReference type="PANTHER" id="PTHR43661:SF3">
    <property type="entry name" value="D-XYLONATE DEHYDRATASE YAGF-RELATED"/>
    <property type="match status" value="1"/>
</dbReference>
<dbReference type="Pfam" id="PF24877">
    <property type="entry name" value="ILV_EDD_C"/>
    <property type="match status" value="1"/>
</dbReference>
<dbReference type="Pfam" id="PF00920">
    <property type="entry name" value="ILVD_EDD_N"/>
    <property type="match status" value="1"/>
</dbReference>
<dbReference type="SUPFAM" id="SSF143975">
    <property type="entry name" value="IlvD/EDD N-terminal domain-like"/>
    <property type="match status" value="1"/>
</dbReference>
<dbReference type="SUPFAM" id="SSF52016">
    <property type="entry name" value="LeuD/IlvD-like"/>
    <property type="match status" value="1"/>
</dbReference>
<dbReference type="PROSITE" id="PS00886">
    <property type="entry name" value="ILVD_EDD_1"/>
    <property type="match status" value="1"/>
</dbReference>
<dbReference type="PROSITE" id="PS00887">
    <property type="entry name" value="ILVD_EDD_2"/>
    <property type="match status" value="1"/>
</dbReference>
<name>ILVD_SOLM1</name>
<evidence type="ECO:0000255" key="1">
    <source>
        <dbReference type="HAMAP-Rule" id="MF_00012"/>
    </source>
</evidence>
<proteinExistence type="inferred from homology"/>
<accession>C4XT34</accession>
<comment type="function">
    <text evidence="1">Functions in the biosynthesis of branched-chain amino acids. Catalyzes the dehydration of (2R,3R)-2,3-dihydroxy-3-methylpentanoate (2,3-dihydroxy-3-methylvalerate) into 2-oxo-3-methylpentanoate (2-oxo-3-methylvalerate) and of (2R)-2,3-dihydroxy-3-methylbutanoate (2,3-dihydroxyisovalerate) into 2-oxo-3-methylbutanoate (2-oxoisovalerate), the penultimate precursor to L-isoleucine and L-valine, respectively.</text>
</comment>
<comment type="catalytic activity">
    <reaction evidence="1">
        <text>(2R)-2,3-dihydroxy-3-methylbutanoate = 3-methyl-2-oxobutanoate + H2O</text>
        <dbReference type="Rhea" id="RHEA:24809"/>
        <dbReference type="ChEBI" id="CHEBI:11851"/>
        <dbReference type="ChEBI" id="CHEBI:15377"/>
        <dbReference type="ChEBI" id="CHEBI:49072"/>
        <dbReference type="EC" id="4.2.1.9"/>
    </reaction>
    <physiologicalReaction direction="left-to-right" evidence="1">
        <dbReference type="Rhea" id="RHEA:24810"/>
    </physiologicalReaction>
</comment>
<comment type="catalytic activity">
    <reaction evidence="1">
        <text>(2R,3R)-2,3-dihydroxy-3-methylpentanoate = (S)-3-methyl-2-oxopentanoate + H2O</text>
        <dbReference type="Rhea" id="RHEA:27694"/>
        <dbReference type="ChEBI" id="CHEBI:15377"/>
        <dbReference type="ChEBI" id="CHEBI:35146"/>
        <dbReference type="ChEBI" id="CHEBI:49258"/>
        <dbReference type="EC" id="4.2.1.9"/>
    </reaction>
    <physiologicalReaction direction="left-to-right" evidence="1">
        <dbReference type="Rhea" id="RHEA:27695"/>
    </physiologicalReaction>
</comment>
<comment type="cofactor">
    <cofactor evidence="1">
        <name>[2Fe-2S] cluster</name>
        <dbReference type="ChEBI" id="CHEBI:190135"/>
    </cofactor>
    <text evidence="1">Binds 1 [2Fe-2S] cluster per subunit. This cluster acts as a Lewis acid cofactor.</text>
</comment>
<comment type="cofactor">
    <cofactor evidence="1">
        <name>Mg(2+)</name>
        <dbReference type="ChEBI" id="CHEBI:18420"/>
    </cofactor>
</comment>
<comment type="pathway">
    <text evidence="1">Amino-acid biosynthesis; L-isoleucine biosynthesis; L-isoleucine from 2-oxobutanoate: step 3/4.</text>
</comment>
<comment type="pathway">
    <text evidence="1">Amino-acid biosynthesis; L-valine biosynthesis; L-valine from pyruvate: step 3/4.</text>
</comment>
<comment type="subunit">
    <text evidence="1">Homodimer.</text>
</comment>
<comment type="similarity">
    <text evidence="1">Belongs to the IlvD/Edd family.</text>
</comment>
<protein>
    <recommendedName>
        <fullName evidence="1">Dihydroxy-acid dehydratase</fullName>
        <shortName evidence="1">DAD</shortName>
        <ecNumber evidence="1">4.2.1.9</ecNumber>
    </recommendedName>
</protein>
<sequence>MRSSLFKSGLEKAPHRSLLYALGLTKEEMRRPLIGVVNSANEVVPGHIHLNTIAEAVKAGIRLAGGTPMTFPVIGVCDGLAMNHAGMHFSLVSREIIADSIEIMASAHPFDALVCIPNCDKVVPGMLMAMLRLNIPAVIVSGGPMLAGTTSEGSFDLIDVFEAVGKFKRGAINEDQLEELEENACPGCGSCSGMFTANSMNCLSESVGLGLPGNGTIPAVSAKRVRLAKTAGMRVMDLLEKNIRPRDIVTAKSIENAVTMDMALGCSTNTVLHLPAVFAEAGLPLTLDIFDAVSRKTPNLCKLSPAGKHYLDDLERAGGIPAVMSELAKRGLLHLDVMTATGKTLGENLTDLKARVKNFDVIRAKEPYANEGGIAILRGSLAPDGAVVKQSAVAPAMMRHTGPARVFDSEEAANKAILGGEIKAGDVVVIRYEGPQGGPGMREMLSPTSNIMGMGLGETVALITDGRFSGGTRGAAIGHVSPEAAEGGPIALIRDGDRIEVDIPGRKLDVLVDAAELEARRASVVAPEKVIESPLLRRYASLVKSAAQGAVYKDPAAK</sequence>
<keyword id="KW-0001">2Fe-2S</keyword>
<keyword id="KW-0028">Amino-acid biosynthesis</keyword>
<keyword id="KW-0100">Branched-chain amino acid biosynthesis</keyword>
<keyword id="KW-0408">Iron</keyword>
<keyword id="KW-0411">Iron-sulfur</keyword>
<keyword id="KW-0456">Lyase</keyword>
<keyword id="KW-0460">Magnesium</keyword>
<keyword id="KW-0479">Metal-binding</keyword>